<dbReference type="EC" id="1.4.1.2"/>
<dbReference type="EMBL" id="BX571856">
    <property type="protein sequence ID" value="CAG39926.1"/>
    <property type="molecule type" value="Genomic_DNA"/>
</dbReference>
<dbReference type="RefSeq" id="WP_000138487.1">
    <property type="nucleotide sequence ID" value="NC_002952.2"/>
</dbReference>
<dbReference type="SMR" id="Q6GID0"/>
<dbReference type="KEGG" id="sar:SAR0920"/>
<dbReference type="HOGENOM" id="CLU_025763_1_2_9"/>
<dbReference type="Proteomes" id="UP000000596">
    <property type="component" value="Chromosome"/>
</dbReference>
<dbReference type="GO" id="GO:0004352">
    <property type="term" value="F:glutamate dehydrogenase (NAD+) activity"/>
    <property type="evidence" value="ECO:0000250"/>
    <property type="project" value="UniProtKB"/>
</dbReference>
<dbReference type="GO" id="GO:0006520">
    <property type="term" value="P:amino acid metabolic process"/>
    <property type="evidence" value="ECO:0000250"/>
    <property type="project" value="UniProtKB"/>
</dbReference>
<dbReference type="GO" id="GO:0006538">
    <property type="term" value="P:glutamate catabolic process"/>
    <property type="evidence" value="ECO:0007669"/>
    <property type="project" value="TreeGrafter"/>
</dbReference>
<dbReference type="CDD" id="cd01076">
    <property type="entry name" value="NAD_bind_1_Glu_DH"/>
    <property type="match status" value="1"/>
</dbReference>
<dbReference type="FunFam" id="3.40.50.10860:FF:000008">
    <property type="entry name" value="Glutamate dehydrogenase"/>
    <property type="match status" value="1"/>
</dbReference>
<dbReference type="FunFam" id="3.40.50.720:FF:000242">
    <property type="entry name" value="Glutamate dehydrogenase"/>
    <property type="match status" value="1"/>
</dbReference>
<dbReference type="Gene3D" id="1.10.8.1210">
    <property type="match status" value="2"/>
</dbReference>
<dbReference type="Gene3D" id="3.40.50.10860">
    <property type="entry name" value="Leucine Dehydrogenase, chain A, domain 1"/>
    <property type="match status" value="1"/>
</dbReference>
<dbReference type="Gene3D" id="3.40.50.720">
    <property type="entry name" value="NAD(P)-binding Rossmann-like Domain"/>
    <property type="match status" value="1"/>
</dbReference>
<dbReference type="InterPro" id="IPR046346">
    <property type="entry name" value="Aminoacid_DH-like_N_sf"/>
</dbReference>
<dbReference type="InterPro" id="IPR006095">
    <property type="entry name" value="Glu/Leu/Phe/Val/Trp_DH"/>
</dbReference>
<dbReference type="InterPro" id="IPR006096">
    <property type="entry name" value="Glu/Leu/Phe/Val/Trp_DH_C"/>
</dbReference>
<dbReference type="InterPro" id="IPR006097">
    <property type="entry name" value="Glu/Leu/Phe/Val/Trp_DH_dimer"/>
</dbReference>
<dbReference type="InterPro" id="IPR033524">
    <property type="entry name" value="Glu/Leu/Phe/Val_DH_AS"/>
</dbReference>
<dbReference type="InterPro" id="IPR014362">
    <property type="entry name" value="Glu_DH"/>
</dbReference>
<dbReference type="InterPro" id="IPR036291">
    <property type="entry name" value="NAD(P)-bd_dom_sf"/>
</dbReference>
<dbReference type="InterPro" id="IPR033922">
    <property type="entry name" value="NAD_bind_Glu_DH"/>
</dbReference>
<dbReference type="PANTHER" id="PTHR11606">
    <property type="entry name" value="GLUTAMATE DEHYDROGENASE"/>
    <property type="match status" value="1"/>
</dbReference>
<dbReference type="PANTHER" id="PTHR11606:SF13">
    <property type="entry name" value="GLUTAMATE DEHYDROGENASE 1, MITOCHONDRIAL"/>
    <property type="match status" value="1"/>
</dbReference>
<dbReference type="Pfam" id="PF00208">
    <property type="entry name" value="ELFV_dehydrog"/>
    <property type="match status" value="1"/>
</dbReference>
<dbReference type="Pfam" id="PF02812">
    <property type="entry name" value="ELFV_dehydrog_N"/>
    <property type="match status" value="1"/>
</dbReference>
<dbReference type="PIRSF" id="PIRSF000185">
    <property type="entry name" value="Glu_DH"/>
    <property type="match status" value="1"/>
</dbReference>
<dbReference type="PRINTS" id="PR00082">
    <property type="entry name" value="GLFDHDRGNASE"/>
</dbReference>
<dbReference type="SMART" id="SM00839">
    <property type="entry name" value="ELFV_dehydrog"/>
    <property type="match status" value="1"/>
</dbReference>
<dbReference type="SUPFAM" id="SSF53223">
    <property type="entry name" value="Aminoacid dehydrogenase-like, N-terminal domain"/>
    <property type="match status" value="1"/>
</dbReference>
<dbReference type="SUPFAM" id="SSF51735">
    <property type="entry name" value="NAD(P)-binding Rossmann-fold domains"/>
    <property type="match status" value="1"/>
</dbReference>
<dbReference type="PROSITE" id="PS00074">
    <property type="entry name" value="GLFV_DEHYDROGENASE"/>
    <property type="match status" value="1"/>
</dbReference>
<reference key="1">
    <citation type="journal article" date="2004" name="Proc. Natl. Acad. Sci. U.S.A.">
        <title>Complete genomes of two clinical Staphylococcus aureus strains: evidence for the rapid evolution of virulence and drug resistance.</title>
        <authorList>
            <person name="Holden M.T.G."/>
            <person name="Feil E.J."/>
            <person name="Lindsay J.A."/>
            <person name="Peacock S.J."/>
            <person name="Day N.P.J."/>
            <person name="Enright M.C."/>
            <person name="Foster T.J."/>
            <person name="Moore C.E."/>
            <person name="Hurst L."/>
            <person name="Atkin R."/>
            <person name="Barron A."/>
            <person name="Bason N."/>
            <person name="Bentley S.D."/>
            <person name="Chillingworth C."/>
            <person name="Chillingworth T."/>
            <person name="Churcher C."/>
            <person name="Clark L."/>
            <person name="Corton C."/>
            <person name="Cronin A."/>
            <person name="Doggett J."/>
            <person name="Dowd L."/>
            <person name="Feltwell T."/>
            <person name="Hance Z."/>
            <person name="Harris B."/>
            <person name="Hauser H."/>
            <person name="Holroyd S."/>
            <person name="Jagels K."/>
            <person name="James K.D."/>
            <person name="Lennard N."/>
            <person name="Line A."/>
            <person name="Mayes R."/>
            <person name="Moule S."/>
            <person name="Mungall K."/>
            <person name="Ormond D."/>
            <person name="Quail M.A."/>
            <person name="Rabbinowitsch E."/>
            <person name="Rutherford K.M."/>
            <person name="Sanders M."/>
            <person name="Sharp S."/>
            <person name="Simmonds M."/>
            <person name="Stevens K."/>
            <person name="Whitehead S."/>
            <person name="Barrell B.G."/>
            <person name="Spratt B.G."/>
            <person name="Parkhill J."/>
        </authorList>
    </citation>
    <scope>NUCLEOTIDE SEQUENCE [LARGE SCALE GENOMIC DNA]</scope>
    <source>
        <strain>MRSA252</strain>
    </source>
</reference>
<proteinExistence type="inferred from homology"/>
<organism>
    <name type="scientific">Staphylococcus aureus (strain MRSA252)</name>
    <dbReference type="NCBI Taxonomy" id="282458"/>
    <lineage>
        <taxon>Bacteria</taxon>
        <taxon>Bacillati</taxon>
        <taxon>Bacillota</taxon>
        <taxon>Bacilli</taxon>
        <taxon>Bacillales</taxon>
        <taxon>Staphylococcaceae</taxon>
        <taxon>Staphylococcus</taxon>
    </lineage>
</organism>
<feature type="chain" id="PRO_0000223329" description="NAD-specific glutamate dehydrogenase">
    <location>
        <begin position="1"/>
        <end position="414"/>
    </location>
</feature>
<feature type="active site" description="Proton donor" evidence="2">
    <location>
        <position position="106"/>
    </location>
</feature>
<feature type="binding site" evidence="1">
    <location>
        <position position="70"/>
    </location>
    <ligand>
        <name>substrate</name>
    </ligand>
</feature>
<feature type="binding site" evidence="1">
    <location>
        <position position="94"/>
    </location>
    <ligand>
        <name>substrate</name>
    </ligand>
</feature>
<feature type="binding site" evidence="1">
    <location>
        <position position="190"/>
    </location>
    <ligand>
        <name>NAD(+)</name>
        <dbReference type="ChEBI" id="CHEBI:57540"/>
    </ligand>
</feature>
<feature type="binding site" evidence="1">
    <location>
        <position position="221"/>
    </location>
    <ligand>
        <name>NAD(+)</name>
        <dbReference type="ChEBI" id="CHEBI:57540"/>
    </ligand>
</feature>
<feature type="binding site" evidence="1">
    <location>
        <position position="348"/>
    </location>
    <ligand>
        <name>substrate</name>
    </ligand>
</feature>
<feature type="site" description="Important for catalysis" evidence="1">
    <location>
        <position position="146"/>
    </location>
</feature>
<accession>Q6GID0</accession>
<evidence type="ECO:0000250" key="1"/>
<evidence type="ECO:0000255" key="2">
    <source>
        <dbReference type="PROSITE-ProRule" id="PRU10011"/>
    </source>
</evidence>
<evidence type="ECO:0000305" key="3"/>
<gene>
    <name type="primary">gluD</name>
    <name type="ordered locus">SAR0920</name>
</gene>
<comment type="catalytic activity">
    <reaction>
        <text>L-glutamate + NAD(+) + H2O = 2-oxoglutarate + NH4(+) + NADH + H(+)</text>
        <dbReference type="Rhea" id="RHEA:15133"/>
        <dbReference type="ChEBI" id="CHEBI:15377"/>
        <dbReference type="ChEBI" id="CHEBI:15378"/>
        <dbReference type="ChEBI" id="CHEBI:16810"/>
        <dbReference type="ChEBI" id="CHEBI:28938"/>
        <dbReference type="ChEBI" id="CHEBI:29985"/>
        <dbReference type="ChEBI" id="CHEBI:57540"/>
        <dbReference type="ChEBI" id="CHEBI:57945"/>
        <dbReference type="EC" id="1.4.1.2"/>
    </reaction>
</comment>
<comment type="subunit">
    <text evidence="1">Homohexamer.</text>
</comment>
<comment type="similarity">
    <text evidence="3">Belongs to the Glu/Leu/Phe/Val dehydrogenases family.</text>
</comment>
<name>DHE2_STAAR</name>
<protein>
    <recommendedName>
        <fullName>NAD-specific glutamate dehydrogenase</fullName>
        <shortName>NAD-GDH</shortName>
        <ecNumber>1.4.1.2</ecNumber>
    </recommendedName>
</protein>
<keyword id="KW-0520">NAD</keyword>
<keyword id="KW-0560">Oxidoreductase</keyword>
<sequence>MTENNNLVTSTQGIIKEALHKLGFDEGMYDLIKEPLRMLQVRIPVRMDDGTVKTFTGYRAQHNDAVGPTKGGVRFHPDVDEEEVKALSMWMTLKCGIVNLPYGGGKGGIVCDPRQMSIHEVERLSRGYVRAISQFVGPNKDIPAPDVFTNSQIMAWMMDEYSALDKFNSPGFITGKPIVLGGSHGRDRSTALGVVIAIEQAAKRRNMQIEGAKVVIQGFGNAGSFLAKFLYDLGAKIVGISDAYGALHDPNGLDIDYLLDRRDSFGTVTNLFEETISNKELFELDCDILVPAAISNQITEDNAHDIKASIVVEAANGPTTPEATRILTERGILLVPDVLASAGGVTVSYFEWVQNNQGYYWSEEEVNEKLREKLEAAFDTIYELSQNRKIDMRLAAYIIGIKRTAEAARYRGWA</sequence>